<proteinExistence type="inferred from homology"/>
<dbReference type="EC" id="4.3.3.6" evidence="1"/>
<dbReference type="EC" id="3.5.1.2" evidence="1"/>
<dbReference type="EMBL" id="AJ965256">
    <property type="protein sequence ID" value="CAI82761.1"/>
    <property type="molecule type" value="Genomic_DNA"/>
</dbReference>
<dbReference type="RefSeq" id="WP_011309112.1">
    <property type="nucleotide sequence ID" value="NC_007356.1"/>
</dbReference>
<dbReference type="SMR" id="Q3ZX06"/>
<dbReference type="MEROPS" id="C26.A32"/>
<dbReference type="KEGG" id="deh:cbdbA579"/>
<dbReference type="HOGENOM" id="CLU_069674_2_0_0"/>
<dbReference type="UniPathway" id="UPA00245"/>
<dbReference type="Proteomes" id="UP000000433">
    <property type="component" value="Chromosome"/>
</dbReference>
<dbReference type="GO" id="GO:0005829">
    <property type="term" value="C:cytosol"/>
    <property type="evidence" value="ECO:0007669"/>
    <property type="project" value="TreeGrafter"/>
</dbReference>
<dbReference type="GO" id="GO:1903600">
    <property type="term" value="C:glutaminase complex"/>
    <property type="evidence" value="ECO:0007669"/>
    <property type="project" value="TreeGrafter"/>
</dbReference>
<dbReference type="GO" id="GO:0004359">
    <property type="term" value="F:glutaminase activity"/>
    <property type="evidence" value="ECO:0007669"/>
    <property type="project" value="UniProtKB-UniRule"/>
</dbReference>
<dbReference type="GO" id="GO:0036381">
    <property type="term" value="F:pyridoxal 5'-phosphate synthase (glutamine hydrolysing) activity"/>
    <property type="evidence" value="ECO:0007669"/>
    <property type="project" value="UniProtKB-UniRule"/>
</dbReference>
<dbReference type="GO" id="GO:0006543">
    <property type="term" value="P:glutamine catabolic process"/>
    <property type="evidence" value="ECO:0007669"/>
    <property type="project" value="UniProtKB-UniRule"/>
</dbReference>
<dbReference type="GO" id="GO:0042823">
    <property type="term" value="P:pyridoxal phosphate biosynthetic process"/>
    <property type="evidence" value="ECO:0007669"/>
    <property type="project" value="UniProtKB-UniRule"/>
</dbReference>
<dbReference type="GO" id="GO:0008614">
    <property type="term" value="P:pyridoxine metabolic process"/>
    <property type="evidence" value="ECO:0007669"/>
    <property type="project" value="TreeGrafter"/>
</dbReference>
<dbReference type="CDD" id="cd01749">
    <property type="entry name" value="GATase1_PB"/>
    <property type="match status" value="1"/>
</dbReference>
<dbReference type="FunFam" id="3.40.50.880:FF:000010">
    <property type="entry name" value="uncharacterized protein LOC100176842 isoform X2"/>
    <property type="match status" value="1"/>
</dbReference>
<dbReference type="Gene3D" id="3.40.50.880">
    <property type="match status" value="1"/>
</dbReference>
<dbReference type="HAMAP" id="MF_01615">
    <property type="entry name" value="PdxT"/>
    <property type="match status" value="1"/>
</dbReference>
<dbReference type="InterPro" id="IPR029062">
    <property type="entry name" value="Class_I_gatase-like"/>
</dbReference>
<dbReference type="InterPro" id="IPR002161">
    <property type="entry name" value="PdxT/SNO"/>
</dbReference>
<dbReference type="InterPro" id="IPR021196">
    <property type="entry name" value="PdxT/SNO_CS"/>
</dbReference>
<dbReference type="NCBIfam" id="TIGR03800">
    <property type="entry name" value="PLP_synth_Pdx2"/>
    <property type="match status" value="1"/>
</dbReference>
<dbReference type="PANTHER" id="PTHR31559">
    <property type="entry name" value="PYRIDOXAL 5'-PHOSPHATE SYNTHASE SUBUNIT SNO"/>
    <property type="match status" value="1"/>
</dbReference>
<dbReference type="PANTHER" id="PTHR31559:SF0">
    <property type="entry name" value="PYRIDOXAL 5'-PHOSPHATE SYNTHASE SUBUNIT SNO1-RELATED"/>
    <property type="match status" value="1"/>
</dbReference>
<dbReference type="Pfam" id="PF01174">
    <property type="entry name" value="SNO"/>
    <property type="match status" value="1"/>
</dbReference>
<dbReference type="PIRSF" id="PIRSF005639">
    <property type="entry name" value="Glut_amidoT_SNO"/>
    <property type="match status" value="1"/>
</dbReference>
<dbReference type="SUPFAM" id="SSF52317">
    <property type="entry name" value="Class I glutamine amidotransferase-like"/>
    <property type="match status" value="1"/>
</dbReference>
<dbReference type="PROSITE" id="PS01236">
    <property type="entry name" value="PDXT_SNO_1"/>
    <property type="match status" value="1"/>
</dbReference>
<dbReference type="PROSITE" id="PS51130">
    <property type="entry name" value="PDXT_SNO_2"/>
    <property type="match status" value="1"/>
</dbReference>
<sequence>MKIGVLALQGAFREHLNMLGTLGAEAVEVRKAEGLPELSGLIIPGGESTTITKLLDIFGMAEPIKALAKKGMPIWGTCAGMICLAKELPGDISGVKPLGLMDITVRRNAFGRQVNSFEAMLKVKGLDEADFPAVFIRAPLVEKTGKGVEILSKLPDGTIVAVRENNLLAISFHPELSGDNRFHRYFVQMAKTYKA</sequence>
<name>PDXT_DEHMC</name>
<evidence type="ECO:0000255" key="1">
    <source>
        <dbReference type="HAMAP-Rule" id="MF_01615"/>
    </source>
</evidence>
<accession>Q3ZX06</accession>
<organism>
    <name type="scientific">Dehalococcoides mccartyi (strain CBDB1)</name>
    <dbReference type="NCBI Taxonomy" id="255470"/>
    <lineage>
        <taxon>Bacteria</taxon>
        <taxon>Bacillati</taxon>
        <taxon>Chloroflexota</taxon>
        <taxon>Dehalococcoidia</taxon>
        <taxon>Dehalococcoidales</taxon>
        <taxon>Dehalococcoidaceae</taxon>
        <taxon>Dehalococcoides</taxon>
    </lineage>
</organism>
<feature type="chain" id="PRO_0000255829" description="Pyridoxal 5'-phosphate synthase subunit PdxT">
    <location>
        <begin position="1"/>
        <end position="195"/>
    </location>
</feature>
<feature type="active site" description="Nucleophile" evidence="1">
    <location>
        <position position="78"/>
    </location>
</feature>
<feature type="active site" description="Charge relay system" evidence="1">
    <location>
        <position position="173"/>
    </location>
</feature>
<feature type="active site" description="Charge relay system" evidence="1">
    <location>
        <position position="175"/>
    </location>
</feature>
<feature type="binding site" evidence="1">
    <location>
        <begin position="46"/>
        <end position="48"/>
    </location>
    <ligand>
        <name>L-glutamine</name>
        <dbReference type="ChEBI" id="CHEBI:58359"/>
    </ligand>
</feature>
<feature type="binding site" evidence="1">
    <location>
        <position position="107"/>
    </location>
    <ligand>
        <name>L-glutamine</name>
        <dbReference type="ChEBI" id="CHEBI:58359"/>
    </ligand>
</feature>
<feature type="binding site" evidence="1">
    <location>
        <begin position="136"/>
        <end position="137"/>
    </location>
    <ligand>
        <name>L-glutamine</name>
        <dbReference type="ChEBI" id="CHEBI:58359"/>
    </ligand>
</feature>
<comment type="function">
    <text evidence="1">Catalyzes the hydrolysis of glutamine to glutamate and ammonia as part of the biosynthesis of pyridoxal 5'-phosphate. The resulting ammonia molecule is channeled to the active site of PdxS.</text>
</comment>
<comment type="catalytic activity">
    <reaction evidence="1">
        <text>aldehydo-D-ribose 5-phosphate + D-glyceraldehyde 3-phosphate + L-glutamine = pyridoxal 5'-phosphate + L-glutamate + phosphate + 3 H2O + H(+)</text>
        <dbReference type="Rhea" id="RHEA:31507"/>
        <dbReference type="ChEBI" id="CHEBI:15377"/>
        <dbReference type="ChEBI" id="CHEBI:15378"/>
        <dbReference type="ChEBI" id="CHEBI:29985"/>
        <dbReference type="ChEBI" id="CHEBI:43474"/>
        <dbReference type="ChEBI" id="CHEBI:58273"/>
        <dbReference type="ChEBI" id="CHEBI:58359"/>
        <dbReference type="ChEBI" id="CHEBI:59776"/>
        <dbReference type="ChEBI" id="CHEBI:597326"/>
        <dbReference type="EC" id="4.3.3.6"/>
    </reaction>
</comment>
<comment type="catalytic activity">
    <reaction evidence="1">
        <text>L-glutamine + H2O = L-glutamate + NH4(+)</text>
        <dbReference type="Rhea" id="RHEA:15889"/>
        <dbReference type="ChEBI" id="CHEBI:15377"/>
        <dbReference type="ChEBI" id="CHEBI:28938"/>
        <dbReference type="ChEBI" id="CHEBI:29985"/>
        <dbReference type="ChEBI" id="CHEBI:58359"/>
        <dbReference type="EC" id="3.5.1.2"/>
    </reaction>
</comment>
<comment type="pathway">
    <text evidence="1">Cofactor biosynthesis; pyridoxal 5'-phosphate biosynthesis.</text>
</comment>
<comment type="subunit">
    <text evidence="1">In the presence of PdxS, forms a dodecamer of heterodimers. Only shows activity in the heterodimer.</text>
</comment>
<comment type="similarity">
    <text evidence="1">Belongs to the glutaminase PdxT/SNO family.</text>
</comment>
<keyword id="KW-0315">Glutamine amidotransferase</keyword>
<keyword id="KW-0378">Hydrolase</keyword>
<keyword id="KW-0456">Lyase</keyword>
<keyword id="KW-0663">Pyridoxal phosphate</keyword>
<protein>
    <recommendedName>
        <fullName evidence="1">Pyridoxal 5'-phosphate synthase subunit PdxT</fullName>
        <ecNumber evidence="1">4.3.3.6</ecNumber>
    </recommendedName>
    <alternativeName>
        <fullName evidence="1">Pdx2</fullName>
    </alternativeName>
    <alternativeName>
        <fullName evidence="1">Pyridoxal 5'-phosphate synthase glutaminase subunit</fullName>
        <ecNumber evidence="1">3.5.1.2</ecNumber>
    </alternativeName>
</protein>
<gene>
    <name evidence="1" type="primary">pdxT</name>
    <name type="ordered locus">cbdbA579</name>
</gene>
<reference key="1">
    <citation type="journal article" date="2005" name="Nat. Biotechnol.">
        <title>Genome sequence of the chlorinated compound-respiring bacterium Dehalococcoides species strain CBDB1.</title>
        <authorList>
            <person name="Kube M."/>
            <person name="Beck A."/>
            <person name="Zinder S.H."/>
            <person name="Kuhl H."/>
            <person name="Reinhardt R."/>
            <person name="Adrian L."/>
        </authorList>
    </citation>
    <scope>NUCLEOTIDE SEQUENCE [LARGE SCALE GENOMIC DNA]</scope>
    <source>
        <strain>CBDB1</strain>
    </source>
</reference>